<sequence>MGRIRQTFIKRTGEELIEKFADKFTSDFEENKKAVEEVAMISTKTLRNRVAGYVTAKVKKMNA</sequence>
<accession>A6VJN0</accession>
<organism>
    <name type="scientific">Methanococcus maripaludis (strain C7 / ATCC BAA-1331)</name>
    <dbReference type="NCBI Taxonomy" id="426368"/>
    <lineage>
        <taxon>Archaea</taxon>
        <taxon>Methanobacteriati</taxon>
        <taxon>Methanobacteriota</taxon>
        <taxon>Methanomada group</taxon>
        <taxon>Methanococci</taxon>
        <taxon>Methanococcales</taxon>
        <taxon>Methanococcaceae</taxon>
        <taxon>Methanococcus</taxon>
    </lineage>
</organism>
<feature type="chain" id="PRO_1000050626" description="Small ribosomal subunit protein eS17">
    <location>
        <begin position="1"/>
        <end position="63"/>
    </location>
</feature>
<proteinExistence type="inferred from homology"/>
<protein>
    <recommendedName>
        <fullName evidence="1">Small ribosomal subunit protein eS17</fullName>
    </recommendedName>
    <alternativeName>
        <fullName evidence="2">30S ribosomal protein S17e</fullName>
    </alternativeName>
</protein>
<name>RS17E_METM7</name>
<evidence type="ECO:0000255" key="1">
    <source>
        <dbReference type="HAMAP-Rule" id="MF_00511"/>
    </source>
</evidence>
<evidence type="ECO:0000305" key="2"/>
<comment type="similarity">
    <text evidence="1">Belongs to the eukaryotic ribosomal protein eS17 family.</text>
</comment>
<reference key="1">
    <citation type="submission" date="2007-06" db="EMBL/GenBank/DDBJ databases">
        <title>Complete sequence of Methanococcus maripaludis C7.</title>
        <authorList>
            <consortium name="US DOE Joint Genome Institute"/>
            <person name="Copeland A."/>
            <person name="Lucas S."/>
            <person name="Lapidus A."/>
            <person name="Barry K."/>
            <person name="Glavina del Rio T."/>
            <person name="Dalin E."/>
            <person name="Tice H."/>
            <person name="Pitluck S."/>
            <person name="Clum A."/>
            <person name="Schmutz J."/>
            <person name="Larimer F."/>
            <person name="Land M."/>
            <person name="Hauser L."/>
            <person name="Kyrpides N."/>
            <person name="Anderson I."/>
            <person name="Sieprawska-Lupa M."/>
            <person name="Whitman W.B."/>
            <person name="Richardson P."/>
        </authorList>
    </citation>
    <scope>NUCLEOTIDE SEQUENCE [LARGE SCALE GENOMIC DNA]</scope>
    <source>
        <strain>C7 / ATCC BAA-1331</strain>
    </source>
</reference>
<gene>
    <name evidence="1" type="primary">rps17e</name>
    <name type="ordered locus">MmarC7_1598</name>
</gene>
<keyword id="KW-0687">Ribonucleoprotein</keyword>
<keyword id="KW-0689">Ribosomal protein</keyword>
<dbReference type="EMBL" id="CP000745">
    <property type="protein sequence ID" value="ABR66656.1"/>
    <property type="molecule type" value="Genomic_DNA"/>
</dbReference>
<dbReference type="SMR" id="A6VJN0"/>
<dbReference type="STRING" id="426368.MmarC7_1598"/>
<dbReference type="KEGG" id="mmz:MmarC7_1598"/>
<dbReference type="eggNOG" id="arCOG01885">
    <property type="taxonomic scope" value="Archaea"/>
</dbReference>
<dbReference type="HOGENOM" id="CLU_176720_0_1_2"/>
<dbReference type="OrthoDB" id="52479at2157"/>
<dbReference type="GO" id="GO:0005829">
    <property type="term" value="C:cytosol"/>
    <property type="evidence" value="ECO:0007669"/>
    <property type="project" value="UniProtKB-ARBA"/>
</dbReference>
<dbReference type="GO" id="GO:1990904">
    <property type="term" value="C:ribonucleoprotein complex"/>
    <property type="evidence" value="ECO:0007669"/>
    <property type="project" value="UniProtKB-KW"/>
</dbReference>
<dbReference type="GO" id="GO:0005840">
    <property type="term" value="C:ribosome"/>
    <property type="evidence" value="ECO:0007669"/>
    <property type="project" value="UniProtKB-KW"/>
</dbReference>
<dbReference type="GO" id="GO:0003735">
    <property type="term" value="F:structural constituent of ribosome"/>
    <property type="evidence" value="ECO:0007669"/>
    <property type="project" value="InterPro"/>
</dbReference>
<dbReference type="GO" id="GO:0006412">
    <property type="term" value="P:translation"/>
    <property type="evidence" value="ECO:0007669"/>
    <property type="project" value="UniProtKB-UniRule"/>
</dbReference>
<dbReference type="Gene3D" id="1.10.60.20">
    <property type="entry name" value="Ribosomal protein S17e-like"/>
    <property type="match status" value="1"/>
</dbReference>
<dbReference type="HAMAP" id="MF_00511">
    <property type="entry name" value="Ribosomal_eS17"/>
    <property type="match status" value="1"/>
</dbReference>
<dbReference type="InterPro" id="IPR001210">
    <property type="entry name" value="Ribosomal_eS17"/>
</dbReference>
<dbReference type="InterPro" id="IPR018273">
    <property type="entry name" value="Ribosomal_eS17_CS"/>
</dbReference>
<dbReference type="InterPro" id="IPR036401">
    <property type="entry name" value="Ribosomal_eS17_sf"/>
</dbReference>
<dbReference type="NCBIfam" id="NF002242">
    <property type="entry name" value="PRK01151.1"/>
    <property type="match status" value="1"/>
</dbReference>
<dbReference type="PANTHER" id="PTHR10732">
    <property type="entry name" value="40S RIBOSOMAL PROTEIN S17"/>
    <property type="match status" value="1"/>
</dbReference>
<dbReference type="PANTHER" id="PTHR10732:SF0">
    <property type="entry name" value="40S RIBOSOMAL PROTEIN S17"/>
    <property type="match status" value="1"/>
</dbReference>
<dbReference type="Pfam" id="PF00833">
    <property type="entry name" value="Ribosomal_S17e"/>
    <property type="match status" value="1"/>
</dbReference>
<dbReference type="SUPFAM" id="SSF116820">
    <property type="entry name" value="Rps17e-like"/>
    <property type="match status" value="1"/>
</dbReference>
<dbReference type="PROSITE" id="PS00712">
    <property type="entry name" value="RIBOSOMAL_S17E"/>
    <property type="match status" value="1"/>
</dbReference>